<evidence type="ECO:0000250" key="1">
    <source>
        <dbReference type="UniProtKB" id="Q9VJI9"/>
    </source>
</evidence>
<evidence type="ECO:0000255" key="2">
    <source>
        <dbReference type="HAMAP-Rule" id="MF_03038"/>
    </source>
</evidence>
<evidence type="ECO:0000256" key="3">
    <source>
        <dbReference type="SAM" id="MobiDB-lite"/>
    </source>
</evidence>
<reference key="1">
    <citation type="journal article" date="2007" name="Nature">
        <title>Evolution of genes and genomes on the Drosophila phylogeny.</title>
        <authorList>
            <consortium name="Drosophila 12 genomes consortium"/>
        </authorList>
    </citation>
    <scope>NUCLEOTIDE SEQUENCE [LARGE SCALE GENOMIC DNA]</scope>
    <source>
        <strain>Rob3c / Tucson 14021-0248.25</strain>
    </source>
</reference>
<dbReference type="EMBL" id="CH480822">
    <property type="protein sequence ID" value="EDW55496.1"/>
    <property type="molecule type" value="Genomic_DNA"/>
</dbReference>
<dbReference type="RefSeq" id="XP_002038850.1">
    <property type="nucleotide sequence ID" value="XM_002038814.1"/>
</dbReference>
<dbReference type="SMR" id="B4I540"/>
<dbReference type="STRING" id="7238.B4I540"/>
<dbReference type="EnsemblMetazoa" id="FBtr0200184">
    <property type="protein sequence ID" value="FBpp0198676"/>
    <property type="gene ID" value="FBgn0172110"/>
</dbReference>
<dbReference type="GeneID" id="6614417"/>
<dbReference type="KEGG" id="dse:6614417"/>
<dbReference type="CTD" id="4682"/>
<dbReference type="HOGENOM" id="CLU_024839_0_1_1"/>
<dbReference type="OMA" id="VSGCPMR"/>
<dbReference type="PhylomeDB" id="B4I540"/>
<dbReference type="Proteomes" id="UP000001292">
    <property type="component" value="Unassembled WGS sequence"/>
</dbReference>
<dbReference type="GO" id="GO:0005829">
    <property type="term" value="C:cytosol"/>
    <property type="evidence" value="ECO:0000250"/>
    <property type="project" value="UniProtKB"/>
</dbReference>
<dbReference type="GO" id="GO:0051539">
    <property type="term" value="F:4 iron, 4 sulfur cluster binding"/>
    <property type="evidence" value="ECO:0007669"/>
    <property type="project" value="UniProtKB-UniRule"/>
</dbReference>
<dbReference type="GO" id="GO:0005524">
    <property type="term" value="F:ATP binding"/>
    <property type="evidence" value="ECO:0007669"/>
    <property type="project" value="UniProtKB-KW"/>
</dbReference>
<dbReference type="GO" id="GO:0016887">
    <property type="term" value="F:ATP hydrolysis activity"/>
    <property type="evidence" value="ECO:0007669"/>
    <property type="project" value="InterPro"/>
</dbReference>
<dbReference type="GO" id="GO:0140663">
    <property type="term" value="F:ATP-dependent FeS chaperone activity"/>
    <property type="evidence" value="ECO:0007669"/>
    <property type="project" value="InterPro"/>
</dbReference>
<dbReference type="GO" id="GO:0051536">
    <property type="term" value="F:iron-sulfur cluster binding"/>
    <property type="evidence" value="ECO:0000250"/>
    <property type="project" value="UniProtKB"/>
</dbReference>
<dbReference type="GO" id="GO:0046872">
    <property type="term" value="F:metal ion binding"/>
    <property type="evidence" value="ECO:0007669"/>
    <property type="project" value="UniProtKB-KW"/>
</dbReference>
<dbReference type="GO" id="GO:0016226">
    <property type="term" value="P:iron-sulfur cluster assembly"/>
    <property type="evidence" value="ECO:0000250"/>
    <property type="project" value="UniProtKB"/>
</dbReference>
<dbReference type="CDD" id="cd02037">
    <property type="entry name" value="Mrp_NBP35"/>
    <property type="match status" value="1"/>
</dbReference>
<dbReference type="FunFam" id="3.40.50.300:FF:001759">
    <property type="entry name" value="Cytosolic Fe-S cluster assembly factor NUBP1 homolog"/>
    <property type="match status" value="1"/>
</dbReference>
<dbReference type="Gene3D" id="3.40.50.300">
    <property type="entry name" value="P-loop containing nucleotide triphosphate hydrolases"/>
    <property type="match status" value="1"/>
</dbReference>
<dbReference type="HAMAP" id="MF_02040">
    <property type="entry name" value="Mrp_NBP35"/>
    <property type="match status" value="1"/>
</dbReference>
<dbReference type="HAMAP" id="MF_03038">
    <property type="entry name" value="NUBP1"/>
    <property type="match status" value="1"/>
</dbReference>
<dbReference type="InterPro" id="IPR003593">
    <property type="entry name" value="AAA+_ATPase"/>
</dbReference>
<dbReference type="InterPro" id="IPR019591">
    <property type="entry name" value="Mrp/NBP35_ATP-bd"/>
</dbReference>
<dbReference type="InterPro" id="IPR028601">
    <property type="entry name" value="NUBP1/Nbp35"/>
</dbReference>
<dbReference type="InterPro" id="IPR027417">
    <property type="entry name" value="P-loop_NTPase"/>
</dbReference>
<dbReference type="InterPro" id="IPR033756">
    <property type="entry name" value="YlxH/NBP35"/>
</dbReference>
<dbReference type="PANTHER" id="PTHR23264:SF35">
    <property type="entry name" value="CYTOSOLIC FE-S CLUSTER ASSEMBLY FACTOR NUBP1"/>
    <property type="match status" value="1"/>
</dbReference>
<dbReference type="PANTHER" id="PTHR23264">
    <property type="entry name" value="NUCLEOTIDE-BINDING PROTEIN NBP35 YEAST -RELATED"/>
    <property type="match status" value="1"/>
</dbReference>
<dbReference type="Pfam" id="PF10609">
    <property type="entry name" value="ParA"/>
    <property type="match status" value="1"/>
</dbReference>
<dbReference type="SMART" id="SM00382">
    <property type="entry name" value="AAA"/>
    <property type="match status" value="1"/>
</dbReference>
<dbReference type="SUPFAM" id="SSF52540">
    <property type="entry name" value="P-loop containing nucleoside triphosphate hydrolases"/>
    <property type="match status" value="1"/>
</dbReference>
<comment type="function">
    <text evidence="2">Component of the cytosolic iron-sulfur (Fe/S) protein assembly (CIA) machinery. Required for maturation of extramitochondrial Fe-S proteins. The Nubp1-Nubp2 heterotetramer forms a Fe-S scaffold complex, mediating the de novo assembly of an Fe-S cluster and its transfer to target apoproteins.</text>
</comment>
<comment type="cofactor">
    <cofactor evidence="2">
        <name>[4Fe-4S] cluster</name>
        <dbReference type="ChEBI" id="CHEBI:49883"/>
    </cofactor>
    <text evidence="2">Binds 4 [4Fe-4S] clusters per heterotetramer. Contains two stable clusters in the N-termini of Nubp1 and two labile, bridging clusters between subunits of the Nubp1-Nubp2 heterotetramer.</text>
</comment>
<comment type="subunit">
    <text evidence="2">Heterotetramer of 2 Nubp1 and 2 Nubp2 chains.</text>
</comment>
<comment type="subcellular location">
    <subcellularLocation>
        <location evidence="2">Cytoplasm</location>
    </subcellularLocation>
</comment>
<comment type="similarity">
    <text evidence="2">Belongs to the Mrp/NBP35 ATP-binding proteins family. NUBP1/NBP35 subfamily.</text>
</comment>
<feature type="chain" id="PRO_0000382608" description="Cytosolic Fe-S cluster assembly factor Nubp1 homolog">
    <location>
        <begin position="1"/>
        <end position="311"/>
    </location>
</feature>
<feature type="region of interest" description="Disordered" evidence="3">
    <location>
        <begin position="1"/>
        <end position="21"/>
    </location>
</feature>
<feature type="binding site" evidence="2">
    <location>
        <position position="9"/>
    </location>
    <ligand>
        <name>[4Fe-4S] cluster</name>
        <dbReference type="ChEBI" id="CHEBI:49883"/>
        <label>1</label>
    </ligand>
</feature>
<feature type="binding site" evidence="2">
    <location>
        <position position="23"/>
    </location>
    <ligand>
        <name>[4Fe-4S] cluster</name>
        <dbReference type="ChEBI" id="CHEBI:49883"/>
        <label>1</label>
    </ligand>
</feature>
<feature type="binding site" evidence="2">
    <location>
        <position position="26"/>
    </location>
    <ligand>
        <name>[4Fe-4S] cluster</name>
        <dbReference type="ChEBI" id="CHEBI:49883"/>
        <label>1</label>
    </ligand>
</feature>
<feature type="binding site" evidence="2">
    <location>
        <position position="32"/>
    </location>
    <ligand>
        <name>[4Fe-4S] cluster</name>
        <dbReference type="ChEBI" id="CHEBI:49883"/>
        <label>1</label>
    </ligand>
</feature>
<feature type="binding site" evidence="2">
    <location>
        <begin position="63"/>
        <end position="70"/>
    </location>
    <ligand>
        <name>ATP</name>
        <dbReference type="ChEBI" id="CHEBI:30616"/>
    </ligand>
</feature>
<feature type="binding site" evidence="2">
    <location>
        <position position="240"/>
    </location>
    <ligand>
        <name>[4Fe-4S] cluster</name>
        <dbReference type="ChEBI" id="CHEBI:49883"/>
        <label>2</label>
        <note>ligand shared with heterodimeric partner</note>
    </ligand>
</feature>
<feature type="binding site" evidence="2">
    <location>
        <position position="243"/>
    </location>
    <ligand>
        <name>[4Fe-4S] cluster</name>
        <dbReference type="ChEBI" id="CHEBI:49883"/>
        <label>2</label>
        <note>ligand shared with heterodimeric partner</note>
    </ligand>
</feature>
<keyword id="KW-0004">4Fe-4S</keyword>
<keyword id="KW-0067">ATP-binding</keyword>
<keyword id="KW-0963">Cytoplasm</keyword>
<keyword id="KW-0408">Iron</keyword>
<keyword id="KW-0411">Iron-sulfur</keyword>
<keyword id="KW-0479">Metal-binding</keyword>
<keyword id="KW-0547">Nucleotide-binding</keyword>
<keyword id="KW-1185">Reference proteome</keyword>
<sequence>MQAPPPEHCPGVESEDAGKGSACSGCPNQGVCSDPNKKLEDPGKALVVESMKDVKHKLLILSGKGGVGKSTVTSLLARYLARSNPDSNFGVLDIDICGPSQPRLMGALGESVHQSGYGWSPVGIEDNVCLMSIGFLLGSVDDAIIWRGPKKNGMIRQFLSEVDWGNLDLLLLDTPPGTSDEHLSVVSYLKDDTNSESLRAVMVTTPQEVSLLDVRKEINFCKKQNIPIVGVIENMSSFRCGHCGNTSEIFPAKTGGAPAMCAEMGIPLLGSLPLDQQISKACDSGEDLTEFKNVTTEALEGICSKIMASFS</sequence>
<gene>
    <name evidence="1" type="primary">Nubp1</name>
    <name type="ORF">GM17199</name>
</gene>
<protein>
    <recommendedName>
        <fullName evidence="2">Cytosolic Fe-S cluster assembly factor Nubp1 homolog</fullName>
    </recommendedName>
</protein>
<name>NUBP1_DROSE</name>
<proteinExistence type="inferred from homology"/>
<accession>B4I540</accession>
<organism>
    <name type="scientific">Drosophila sechellia</name>
    <name type="common">Fruit fly</name>
    <dbReference type="NCBI Taxonomy" id="7238"/>
    <lineage>
        <taxon>Eukaryota</taxon>
        <taxon>Metazoa</taxon>
        <taxon>Ecdysozoa</taxon>
        <taxon>Arthropoda</taxon>
        <taxon>Hexapoda</taxon>
        <taxon>Insecta</taxon>
        <taxon>Pterygota</taxon>
        <taxon>Neoptera</taxon>
        <taxon>Endopterygota</taxon>
        <taxon>Diptera</taxon>
        <taxon>Brachycera</taxon>
        <taxon>Muscomorpha</taxon>
        <taxon>Ephydroidea</taxon>
        <taxon>Drosophilidae</taxon>
        <taxon>Drosophila</taxon>
        <taxon>Sophophora</taxon>
    </lineage>
</organism>